<accession>A8I5L3</accession>
<proteinExistence type="inferred from homology"/>
<keyword id="KW-0963">Cytoplasm</keyword>
<keyword id="KW-0444">Lipid biosynthesis</keyword>
<keyword id="KW-0443">Lipid metabolism</keyword>
<keyword id="KW-0594">Phospholipid biosynthesis</keyword>
<keyword id="KW-1208">Phospholipid metabolism</keyword>
<keyword id="KW-1185">Reference proteome</keyword>
<keyword id="KW-0808">Transferase</keyword>
<organism>
    <name type="scientific">Azorhizobium caulinodans (strain ATCC 43989 / DSM 5975 / JCM 20966 / LMG 6465 / NBRC 14845 / NCIMB 13405 / ORS 571)</name>
    <dbReference type="NCBI Taxonomy" id="438753"/>
    <lineage>
        <taxon>Bacteria</taxon>
        <taxon>Pseudomonadati</taxon>
        <taxon>Pseudomonadota</taxon>
        <taxon>Alphaproteobacteria</taxon>
        <taxon>Hyphomicrobiales</taxon>
        <taxon>Xanthobacteraceae</taxon>
        <taxon>Azorhizobium</taxon>
    </lineage>
</organism>
<sequence length="355" mass="37380">MSAPVRIAIDAMGGDHGPEVVLPGVELARVRHPDTSFLLFGDEAAIRPILARYPALSTASRIIHTDVVVGMDDKPSQALRRGRYKSSMWRCIDAVKAGEADAAVSAGNTGALMAMAKVNLRTMPGIGRPAIAAIWPTLRGESIVLDVGASIGATSQSLIEMAIMGSAMASTVFDIERPTVGLLNVGVEEVKGVEEVKEAGRILREEGVAGVNYFGFVEGNDIGSGTVDVVVTEGFSGNIALKTAEGTAKQIASYLRAALSRTWRAKLGYLLARDAFAALREKLDPRRSNGGVFLGLNGVVIKSHGGTDAEGFAAAVDLGYDMVRHRLLERIEKSIVTRLPAAGRGSEPVEAEGSS</sequence>
<comment type="function">
    <text evidence="1">Catalyzes the reversible formation of acyl-phosphate (acyl-PO(4)) from acyl-[acyl-carrier-protein] (acyl-ACP). This enzyme utilizes acyl-ACP as fatty acyl donor, but not acyl-CoA.</text>
</comment>
<comment type="catalytic activity">
    <reaction evidence="1">
        <text>a fatty acyl-[ACP] + phosphate = an acyl phosphate + holo-[ACP]</text>
        <dbReference type="Rhea" id="RHEA:42292"/>
        <dbReference type="Rhea" id="RHEA-COMP:9685"/>
        <dbReference type="Rhea" id="RHEA-COMP:14125"/>
        <dbReference type="ChEBI" id="CHEBI:43474"/>
        <dbReference type="ChEBI" id="CHEBI:59918"/>
        <dbReference type="ChEBI" id="CHEBI:64479"/>
        <dbReference type="ChEBI" id="CHEBI:138651"/>
        <dbReference type="EC" id="2.3.1.274"/>
    </reaction>
</comment>
<comment type="pathway">
    <text evidence="1">Lipid metabolism; phospholipid metabolism.</text>
</comment>
<comment type="subunit">
    <text evidence="1">Homodimer. Probably interacts with PlsY.</text>
</comment>
<comment type="subcellular location">
    <subcellularLocation>
        <location evidence="1">Cytoplasm</location>
    </subcellularLocation>
    <text evidence="1">Associated with the membrane possibly through PlsY.</text>
</comment>
<comment type="similarity">
    <text evidence="1">Belongs to the PlsX family.</text>
</comment>
<evidence type="ECO:0000255" key="1">
    <source>
        <dbReference type="HAMAP-Rule" id="MF_00019"/>
    </source>
</evidence>
<feature type="chain" id="PRO_1000070987" description="Phosphate acyltransferase">
    <location>
        <begin position="1"/>
        <end position="355"/>
    </location>
</feature>
<name>PLSX_AZOC5</name>
<dbReference type="EC" id="2.3.1.274" evidence="1"/>
<dbReference type="EMBL" id="AP009384">
    <property type="protein sequence ID" value="BAF88293.1"/>
    <property type="molecule type" value="Genomic_DNA"/>
</dbReference>
<dbReference type="RefSeq" id="WP_012170822.1">
    <property type="nucleotide sequence ID" value="NC_009937.1"/>
</dbReference>
<dbReference type="SMR" id="A8I5L3"/>
<dbReference type="STRING" id="438753.AZC_2295"/>
<dbReference type="KEGG" id="azc:AZC_2295"/>
<dbReference type="eggNOG" id="COG0416">
    <property type="taxonomic scope" value="Bacteria"/>
</dbReference>
<dbReference type="HOGENOM" id="CLU_039379_1_0_5"/>
<dbReference type="UniPathway" id="UPA00085"/>
<dbReference type="Proteomes" id="UP000000270">
    <property type="component" value="Chromosome"/>
</dbReference>
<dbReference type="GO" id="GO:0005737">
    <property type="term" value="C:cytoplasm"/>
    <property type="evidence" value="ECO:0007669"/>
    <property type="project" value="UniProtKB-SubCell"/>
</dbReference>
<dbReference type="GO" id="GO:0043811">
    <property type="term" value="F:phosphate:acyl-[acyl carrier protein] acyltransferase activity"/>
    <property type="evidence" value="ECO:0007669"/>
    <property type="project" value="UniProtKB-UniRule"/>
</dbReference>
<dbReference type="GO" id="GO:0006633">
    <property type="term" value="P:fatty acid biosynthetic process"/>
    <property type="evidence" value="ECO:0007669"/>
    <property type="project" value="UniProtKB-UniRule"/>
</dbReference>
<dbReference type="GO" id="GO:0008654">
    <property type="term" value="P:phospholipid biosynthetic process"/>
    <property type="evidence" value="ECO:0007669"/>
    <property type="project" value="UniProtKB-KW"/>
</dbReference>
<dbReference type="Gene3D" id="3.40.718.10">
    <property type="entry name" value="Isopropylmalate Dehydrogenase"/>
    <property type="match status" value="1"/>
</dbReference>
<dbReference type="HAMAP" id="MF_00019">
    <property type="entry name" value="PlsX"/>
    <property type="match status" value="1"/>
</dbReference>
<dbReference type="InterPro" id="IPR003664">
    <property type="entry name" value="FA_synthesis"/>
</dbReference>
<dbReference type="InterPro" id="IPR012281">
    <property type="entry name" value="Phospholipid_synth_PlsX-like"/>
</dbReference>
<dbReference type="NCBIfam" id="TIGR00182">
    <property type="entry name" value="plsX"/>
    <property type="match status" value="1"/>
</dbReference>
<dbReference type="PANTHER" id="PTHR30100">
    <property type="entry name" value="FATTY ACID/PHOSPHOLIPID SYNTHESIS PROTEIN PLSX"/>
    <property type="match status" value="1"/>
</dbReference>
<dbReference type="PANTHER" id="PTHR30100:SF1">
    <property type="entry name" value="PHOSPHATE ACYLTRANSFERASE"/>
    <property type="match status" value="1"/>
</dbReference>
<dbReference type="Pfam" id="PF02504">
    <property type="entry name" value="FA_synthesis"/>
    <property type="match status" value="1"/>
</dbReference>
<dbReference type="PIRSF" id="PIRSF002465">
    <property type="entry name" value="Phsphlp_syn_PlsX"/>
    <property type="match status" value="1"/>
</dbReference>
<dbReference type="SUPFAM" id="SSF53659">
    <property type="entry name" value="Isocitrate/Isopropylmalate dehydrogenase-like"/>
    <property type="match status" value="1"/>
</dbReference>
<reference key="1">
    <citation type="submission" date="2007-04" db="EMBL/GenBank/DDBJ databases">
        <title>Complete genome sequence of the nitrogen-fixing bacterium Azorhizobium caulinodans ORS571.</title>
        <authorList>
            <person name="Lee K.B."/>
            <person name="Backer P.D."/>
            <person name="Aono T."/>
            <person name="Liu C.T."/>
            <person name="Suzuki S."/>
            <person name="Suzuki T."/>
            <person name="Kaneko T."/>
            <person name="Yamada M."/>
            <person name="Tabata S."/>
            <person name="Kupfer D.M."/>
            <person name="Najar F.Z."/>
            <person name="Wiley G.B."/>
            <person name="Roe B."/>
            <person name="Binnewies T."/>
            <person name="Ussery D."/>
            <person name="Vereecke D."/>
            <person name="Gevers D."/>
            <person name="Holsters M."/>
            <person name="Oyaizu H."/>
        </authorList>
    </citation>
    <scope>NUCLEOTIDE SEQUENCE [LARGE SCALE GENOMIC DNA]</scope>
    <source>
        <strain>ATCC 43989 / DSM 5975 / JCM 20966 / LMG 6465 / NBRC 14845 / NCIMB 13405 / ORS 571</strain>
    </source>
</reference>
<gene>
    <name evidence="1" type="primary">plsX</name>
    <name type="ordered locus">AZC_2295</name>
</gene>
<protein>
    <recommendedName>
        <fullName evidence="1">Phosphate acyltransferase</fullName>
        <ecNumber evidence="1">2.3.1.274</ecNumber>
    </recommendedName>
    <alternativeName>
        <fullName evidence="1">Acyl-ACP phosphotransacylase</fullName>
    </alternativeName>
    <alternativeName>
        <fullName evidence="1">Acyl-[acyl-carrier-protein]--phosphate acyltransferase</fullName>
    </alternativeName>
    <alternativeName>
        <fullName evidence="1">Phosphate-acyl-ACP acyltransferase</fullName>
    </alternativeName>
</protein>